<dbReference type="EC" id="2.7.1.39" evidence="1"/>
<dbReference type="EMBL" id="CP001389">
    <property type="protein sequence ID" value="ACP24330.1"/>
    <property type="molecule type" value="Genomic_DNA"/>
</dbReference>
<dbReference type="RefSeq" id="WP_012707115.1">
    <property type="nucleotide sequence ID" value="NC_012587.1"/>
</dbReference>
<dbReference type="RefSeq" id="YP_002825083.1">
    <property type="nucleotide sequence ID" value="NC_012587.1"/>
</dbReference>
<dbReference type="SMR" id="C3MHK2"/>
<dbReference type="STRING" id="394.NGR_c05340"/>
<dbReference type="KEGG" id="rhi:NGR_c05340"/>
<dbReference type="PATRIC" id="fig|394.7.peg.3347"/>
<dbReference type="eggNOG" id="COG2334">
    <property type="taxonomic scope" value="Bacteria"/>
</dbReference>
<dbReference type="HOGENOM" id="CLU_053300_1_0_5"/>
<dbReference type="OrthoDB" id="9777460at2"/>
<dbReference type="UniPathway" id="UPA00050">
    <property type="reaction ID" value="UER00064"/>
</dbReference>
<dbReference type="Proteomes" id="UP000001054">
    <property type="component" value="Chromosome"/>
</dbReference>
<dbReference type="GO" id="GO:0005524">
    <property type="term" value="F:ATP binding"/>
    <property type="evidence" value="ECO:0007669"/>
    <property type="project" value="UniProtKB-KW"/>
</dbReference>
<dbReference type="GO" id="GO:0004413">
    <property type="term" value="F:homoserine kinase activity"/>
    <property type="evidence" value="ECO:0007669"/>
    <property type="project" value="UniProtKB-UniRule"/>
</dbReference>
<dbReference type="GO" id="GO:0009088">
    <property type="term" value="P:threonine biosynthetic process"/>
    <property type="evidence" value="ECO:0007669"/>
    <property type="project" value="UniProtKB-UniRule"/>
</dbReference>
<dbReference type="CDD" id="cd05153">
    <property type="entry name" value="HomoserineK_II"/>
    <property type="match status" value="1"/>
</dbReference>
<dbReference type="Gene3D" id="3.90.1200.10">
    <property type="match status" value="1"/>
</dbReference>
<dbReference type="Gene3D" id="3.30.200.20">
    <property type="entry name" value="Phosphorylase Kinase, domain 1"/>
    <property type="match status" value="1"/>
</dbReference>
<dbReference type="HAMAP" id="MF_00301">
    <property type="entry name" value="Homoser_kinase_2"/>
    <property type="match status" value="1"/>
</dbReference>
<dbReference type="InterPro" id="IPR002575">
    <property type="entry name" value="Aminoglycoside_PTrfase"/>
</dbReference>
<dbReference type="InterPro" id="IPR005280">
    <property type="entry name" value="Homoserine_kinase_II"/>
</dbReference>
<dbReference type="InterPro" id="IPR011009">
    <property type="entry name" value="Kinase-like_dom_sf"/>
</dbReference>
<dbReference type="InterPro" id="IPR050249">
    <property type="entry name" value="Pseudomonas-type_ThrB"/>
</dbReference>
<dbReference type="NCBIfam" id="NF003558">
    <property type="entry name" value="PRK05231.1"/>
    <property type="match status" value="1"/>
</dbReference>
<dbReference type="NCBIfam" id="TIGR00938">
    <property type="entry name" value="thrB_alt"/>
    <property type="match status" value="1"/>
</dbReference>
<dbReference type="PANTHER" id="PTHR21064:SF6">
    <property type="entry name" value="AMINOGLYCOSIDE PHOSPHOTRANSFERASE DOMAIN-CONTAINING PROTEIN"/>
    <property type="match status" value="1"/>
</dbReference>
<dbReference type="PANTHER" id="PTHR21064">
    <property type="entry name" value="AMINOGLYCOSIDE PHOSPHOTRANSFERASE DOMAIN-CONTAINING PROTEIN-RELATED"/>
    <property type="match status" value="1"/>
</dbReference>
<dbReference type="Pfam" id="PF01636">
    <property type="entry name" value="APH"/>
    <property type="match status" value="1"/>
</dbReference>
<dbReference type="SUPFAM" id="SSF56112">
    <property type="entry name" value="Protein kinase-like (PK-like)"/>
    <property type="match status" value="1"/>
</dbReference>
<organism>
    <name type="scientific">Sinorhizobium fredii (strain NBRC 101917 / NGR234)</name>
    <dbReference type="NCBI Taxonomy" id="394"/>
    <lineage>
        <taxon>Bacteria</taxon>
        <taxon>Pseudomonadati</taxon>
        <taxon>Pseudomonadota</taxon>
        <taxon>Alphaproteobacteria</taxon>
        <taxon>Hyphomicrobiales</taxon>
        <taxon>Rhizobiaceae</taxon>
        <taxon>Sinorhizobium/Ensifer group</taxon>
        <taxon>Sinorhizobium</taxon>
    </lineage>
</organism>
<accession>C3MHK2</accession>
<keyword id="KW-0028">Amino-acid biosynthesis</keyword>
<keyword id="KW-0067">ATP-binding</keyword>
<keyword id="KW-0418">Kinase</keyword>
<keyword id="KW-0547">Nucleotide-binding</keyword>
<keyword id="KW-1185">Reference proteome</keyword>
<keyword id="KW-0791">Threonine biosynthesis</keyword>
<keyword id="KW-0808">Transferase</keyword>
<name>KHSE_SINFN</name>
<feature type="chain" id="PRO_1000196947" description="Homoserine kinase">
    <location>
        <begin position="1"/>
        <end position="326"/>
    </location>
</feature>
<evidence type="ECO:0000255" key="1">
    <source>
        <dbReference type="HAMAP-Rule" id="MF_00301"/>
    </source>
</evidence>
<gene>
    <name evidence="1" type="primary">thrB</name>
    <name type="ordered locus">NGR_c05340</name>
</gene>
<reference key="1">
    <citation type="journal article" date="2009" name="Appl. Environ. Microbiol.">
        <title>Rhizobium sp. strain NGR234 possesses a remarkable number of secretion systems.</title>
        <authorList>
            <person name="Schmeisser C."/>
            <person name="Liesegang H."/>
            <person name="Krysciak D."/>
            <person name="Bakkou N."/>
            <person name="Le Quere A."/>
            <person name="Wollherr A."/>
            <person name="Heinemeyer I."/>
            <person name="Morgenstern B."/>
            <person name="Pommerening-Roeser A."/>
            <person name="Flores M."/>
            <person name="Palacios R."/>
            <person name="Brenner S."/>
            <person name="Gottschalk G."/>
            <person name="Schmitz R.A."/>
            <person name="Broughton W.J."/>
            <person name="Perret X."/>
            <person name="Strittmatter A.W."/>
            <person name="Streit W.R."/>
        </authorList>
    </citation>
    <scope>NUCLEOTIDE SEQUENCE [LARGE SCALE GENOMIC DNA]</scope>
    <source>
        <strain>NBRC 101917 / NGR234</strain>
    </source>
</reference>
<proteinExistence type="inferred from homology"/>
<comment type="catalytic activity">
    <reaction evidence="1">
        <text>L-homoserine + ATP = O-phospho-L-homoserine + ADP + H(+)</text>
        <dbReference type="Rhea" id="RHEA:13985"/>
        <dbReference type="ChEBI" id="CHEBI:15378"/>
        <dbReference type="ChEBI" id="CHEBI:30616"/>
        <dbReference type="ChEBI" id="CHEBI:57476"/>
        <dbReference type="ChEBI" id="CHEBI:57590"/>
        <dbReference type="ChEBI" id="CHEBI:456216"/>
        <dbReference type="EC" id="2.7.1.39"/>
    </reaction>
</comment>
<comment type="pathway">
    <text evidence="1">Amino-acid biosynthesis; L-threonine biosynthesis; L-threonine from L-aspartate: step 4/5.</text>
</comment>
<comment type="similarity">
    <text evidence="1">Belongs to the pseudomonas-type ThrB family.</text>
</comment>
<sequence>MAVYTDITEDELAGFLAAYDVGTLTSYKGIAEGVENSNFLLHTTRGSYILTLYEKRVNADDLPFFLGLMHHLAERGLSCPLPLPRADGALLGTLSGRPAAVISFLEGMWLRKPEAQHCREVGRALASMHEAGEGFALTRANALSVGGWRPLWRNSEARADEVQDGLKEDIAAELAYLEDHWPRNLPQGVIHADLFPDNVFFLGDRLSGLIDFYFACNDFLAYDIAVCLNSWCFEKNGSYNITKGMALLSGYESVRKLTAEEVSALPLLARGSALRFFLTRLYDWLMTPAGALVVKKDPLEYLTKLRFHRAVVSSAEYGLRRDEASQ</sequence>
<protein>
    <recommendedName>
        <fullName evidence="1">Homoserine kinase</fullName>
        <shortName evidence="1">HK</shortName>
        <shortName evidence="1">HSK</shortName>
        <ecNumber evidence="1">2.7.1.39</ecNumber>
    </recommendedName>
</protein>